<comment type="function">
    <text>Not yet known.</text>
</comment>
<comment type="similarity">
    <text evidence="1">Belongs to the adenoviridae E3A-2 family.</text>
</comment>
<accession>P36706</accession>
<organism>
    <name type="scientific">Human adenovirus A serotype 12</name>
    <name type="common">HAdV-12</name>
    <name type="synonym">Human adenovirus 12</name>
    <dbReference type="NCBI Taxonomy" id="28282"/>
    <lineage>
        <taxon>Viruses</taxon>
        <taxon>Varidnaviria</taxon>
        <taxon>Bamfordvirae</taxon>
        <taxon>Preplasmiviricota</taxon>
        <taxon>Tectiliviricetes</taxon>
        <taxon>Rowavirales</taxon>
        <taxon>Adenoviridae</taxon>
        <taxon>Mastadenovirus</taxon>
        <taxon>Human mastadenovirus A</taxon>
    </lineage>
</organism>
<reference key="1">
    <citation type="journal article" date="1994" name="J. Virol.">
        <title>Nucleotide sequence of human adenovirus type 12 DNA: comparative functional analysis.</title>
        <authorList>
            <person name="Sprengel J."/>
            <person name="Schmitz B."/>
            <person name="Heuss-Neitzel D."/>
            <person name="Zock C."/>
            <person name="Doerfler W."/>
        </authorList>
    </citation>
    <scope>NUCLEOTIDE SEQUENCE [LARGE SCALE GENOMIC DNA]</scope>
</reference>
<protein>
    <recommendedName>
        <fullName>Early E3A 12.1 kDa protein</fullName>
    </recommendedName>
</protein>
<sequence length="105" mass="12054">MSNGAADRARLRHLDHCRQPHCFARDICVFTYFELPEEHPQGPAHGVRITVEKGIDTHLIKFFTKRPLLVEKDQGNTILTLYCICPVPGLHEDFCCHLCAEFNHL</sequence>
<dbReference type="EMBL" id="X73487">
    <property type="protein sequence ID" value="CAA51896.1"/>
    <property type="molecule type" value="Genomic_DNA"/>
</dbReference>
<dbReference type="PIR" id="S33947">
    <property type="entry name" value="S33947"/>
</dbReference>
<dbReference type="RefSeq" id="NP_040929.1">
    <property type="nucleotide sequence ID" value="NC_001460.1"/>
</dbReference>
<dbReference type="DNASU" id="1460862"/>
<dbReference type="GeneID" id="1460862"/>
<dbReference type="Proteomes" id="UP000004993">
    <property type="component" value="Genome"/>
</dbReference>
<dbReference type="InterPro" id="IPR007912">
    <property type="entry name" value="Adeno_E3A"/>
</dbReference>
<dbReference type="Pfam" id="PF05248">
    <property type="entry name" value="Adeno_E3A"/>
    <property type="match status" value="1"/>
</dbReference>
<proteinExistence type="inferred from homology"/>
<evidence type="ECO:0000305" key="1"/>
<keyword id="KW-1185">Reference proteome</keyword>
<name>E312_ADE12</name>
<organismHost>
    <name type="scientific">Homo sapiens</name>
    <name type="common">Human</name>
    <dbReference type="NCBI Taxonomy" id="9606"/>
</organismHost>
<feature type="chain" id="PRO_0000221744" description="Early E3A 12.1 kDa protein">
    <location>
        <begin position="1"/>
        <end position="105"/>
    </location>
</feature>